<evidence type="ECO:0000255" key="1">
    <source>
        <dbReference type="HAMAP-Rule" id="MF_00446"/>
    </source>
</evidence>
<feature type="chain" id="PRO_0000306917" description="Aspartate 1-decarboxylase beta chain" evidence="1">
    <location>
        <begin position="1"/>
        <end position="24"/>
    </location>
</feature>
<feature type="chain" id="PRO_0000306918" description="Aspartate 1-decarboxylase alpha chain" evidence="1">
    <location>
        <begin position="25"/>
        <end position="126"/>
    </location>
</feature>
<feature type="active site" description="Schiff-base intermediate with substrate; via pyruvic acid" evidence="1">
    <location>
        <position position="25"/>
    </location>
</feature>
<feature type="active site" description="Proton donor" evidence="1">
    <location>
        <position position="58"/>
    </location>
</feature>
<feature type="binding site" evidence="1">
    <location>
        <position position="57"/>
    </location>
    <ligand>
        <name>substrate</name>
    </ligand>
</feature>
<feature type="binding site" evidence="1">
    <location>
        <begin position="73"/>
        <end position="75"/>
    </location>
    <ligand>
        <name>substrate</name>
    </ligand>
</feature>
<feature type="modified residue" description="Pyruvic acid (Ser)" evidence="1">
    <location>
        <position position="25"/>
    </location>
</feature>
<gene>
    <name evidence="1" type="primary">panD</name>
    <name type="ordered locus">Ajs_3494</name>
</gene>
<accession>A1WBI2</accession>
<dbReference type="EC" id="4.1.1.11" evidence="1"/>
<dbReference type="EMBL" id="CP000539">
    <property type="protein sequence ID" value="ABM43607.1"/>
    <property type="molecule type" value="Genomic_DNA"/>
</dbReference>
<dbReference type="SMR" id="A1WBI2"/>
<dbReference type="STRING" id="232721.Ajs_3494"/>
<dbReference type="KEGG" id="ajs:Ajs_3494"/>
<dbReference type="eggNOG" id="COG0853">
    <property type="taxonomic scope" value="Bacteria"/>
</dbReference>
<dbReference type="HOGENOM" id="CLU_115305_2_1_4"/>
<dbReference type="UniPathway" id="UPA00028">
    <property type="reaction ID" value="UER00002"/>
</dbReference>
<dbReference type="Proteomes" id="UP000000645">
    <property type="component" value="Chromosome"/>
</dbReference>
<dbReference type="GO" id="GO:0005829">
    <property type="term" value="C:cytosol"/>
    <property type="evidence" value="ECO:0007669"/>
    <property type="project" value="TreeGrafter"/>
</dbReference>
<dbReference type="GO" id="GO:0004068">
    <property type="term" value="F:aspartate 1-decarboxylase activity"/>
    <property type="evidence" value="ECO:0007669"/>
    <property type="project" value="UniProtKB-UniRule"/>
</dbReference>
<dbReference type="GO" id="GO:0006523">
    <property type="term" value="P:alanine biosynthetic process"/>
    <property type="evidence" value="ECO:0007669"/>
    <property type="project" value="InterPro"/>
</dbReference>
<dbReference type="GO" id="GO:0015940">
    <property type="term" value="P:pantothenate biosynthetic process"/>
    <property type="evidence" value="ECO:0007669"/>
    <property type="project" value="UniProtKB-UniRule"/>
</dbReference>
<dbReference type="CDD" id="cd06919">
    <property type="entry name" value="Asp_decarbox"/>
    <property type="match status" value="1"/>
</dbReference>
<dbReference type="Gene3D" id="2.40.40.20">
    <property type="match status" value="1"/>
</dbReference>
<dbReference type="HAMAP" id="MF_00446">
    <property type="entry name" value="PanD"/>
    <property type="match status" value="1"/>
</dbReference>
<dbReference type="InterPro" id="IPR009010">
    <property type="entry name" value="Asp_de-COase-like_dom_sf"/>
</dbReference>
<dbReference type="InterPro" id="IPR003190">
    <property type="entry name" value="Asp_decarbox"/>
</dbReference>
<dbReference type="NCBIfam" id="TIGR00223">
    <property type="entry name" value="panD"/>
    <property type="match status" value="1"/>
</dbReference>
<dbReference type="PANTHER" id="PTHR21012">
    <property type="entry name" value="ASPARTATE 1-DECARBOXYLASE"/>
    <property type="match status" value="1"/>
</dbReference>
<dbReference type="PANTHER" id="PTHR21012:SF0">
    <property type="entry name" value="ASPARTATE 1-DECARBOXYLASE"/>
    <property type="match status" value="1"/>
</dbReference>
<dbReference type="Pfam" id="PF02261">
    <property type="entry name" value="Asp_decarbox"/>
    <property type="match status" value="1"/>
</dbReference>
<dbReference type="PIRSF" id="PIRSF006246">
    <property type="entry name" value="Asp_decarbox"/>
    <property type="match status" value="1"/>
</dbReference>
<dbReference type="SUPFAM" id="SSF50692">
    <property type="entry name" value="ADC-like"/>
    <property type="match status" value="1"/>
</dbReference>
<sequence>MYRTLLKSKIHRVKTTHCELHYEGSCAIDEDLLEAANICENEQVHIWNVDNGERFVTYAIKGQRGSGMISVNGSAARRACVGDLLIIAAFAQVAEADVAAHQPQLVFVNDQNRQVELRHHVPTQAL</sequence>
<name>PAND_ACISJ</name>
<keyword id="KW-0068">Autocatalytic cleavage</keyword>
<keyword id="KW-0963">Cytoplasm</keyword>
<keyword id="KW-0210">Decarboxylase</keyword>
<keyword id="KW-0456">Lyase</keyword>
<keyword id="KW-0566">Pantothenate biosynthesis</keyword>
<keyword id="KW-0670">Pyruvate</keyword>
<keyword id="KW-0704">Schiff base</keyword>
<keyword id="KW-0865">Zymogen</keyword>
<protein>
    <recommendedName>
        <fullName evidence="1">Aspartate 1-decarboxylase</fullName>
        <ecNumber evidence="1">4.1.1.11</ecNumber>
    </recommendedName>
    <alternativeName>
        <fullName evidence="1">Aspartate alpha-decarboxylase</fullName>
    </alternativeName>
    <component>
        <recommendedName>
            <fullName evidence="1">Aspartate 1-decarboxylase beta chain</fullName>
        </recommendedName>
    </component>
    <component>
        <recommendedName>
            <fullName evidence="1">Aspartate 1-decarboxylase alpha chain</fullName>
        </recommendedName>
    </component>
</protein>
<organism>
    <name type="scientific">Acidovorax sp. (strain JS42)</name>
    <dbReference type="NCBI Taxonomy" id="232721"/>
    <lineage>
        <taxon>Bacteria</taxon>
        <taxon>Pseudomonadati</taxon>
        <taxon>Pseudomonadota</taxon>
        <taxon>Betaproteobacteria</taxon>
        <taxon>Burkholderiales</taxon>
        <taxon>Comamonadaceae</taxon>
        <taxon>Acidovorax</taxon>
    </lineage>
</organism>
<reference key="1">
    <citation type="submission" date="2006-12" db="EMBL/GenBank/DDBJ databases">
        <title>Complete sequence of chromosome 1 of Acidovorax sp. JS42.</title>
        <authorList>
            <person name="Copeland A."/>
            <person name="Lucas S."/>
            <person name="Lapidus A."/>
            <person name="Barry K."/>
            <person name="Detter J.C."/>
            <person name="Glavina del Rio T."/>
            <person name="Dalin E."/>
            <person name="Tice H."/>
            <person name="Pitluck S."/>
            <person name="Chertkov O."/>
            <person name="Brettin T."/>
            <person name="Bruce D."/>
            <person name="Han C."/>
            <person name="Tapia R."/>
            <person name="Gilna P."/>
            <person name="Schmutz J."/>
            <person name="Larimer F."/>
            <person name="Land M."/>
            <person name="Hauser L."/>
            <person name="Kyrpides N."/>
            <person name="Kim E."/>
            <person name="Stahl D."/>
            <person name="Richardson P."/>
        </authorList>
    </citation>
    <scope>NUCLEOTIDE SEQUENCE [LARGE SCALE GENOMIC DNA]</scope>
    <source>
        <strain>JS42</strain>
    </source>
</reference>
<comment type="function">
    <text evidence="1">Catalyzes the pyruvoyl-dependent decarboxylation of aspartate to produce beta-alanine.</text>
</comment>
<comment type="catalytic activity">
    <reaction evidence="1">
        <text>L-aspartate + H(+) = beta-alanine + CO2</text>
        <dbReference type="Rhea" id="RHEA:19497"/>
        <dbReference type="ChEBI" id="CHEBI:15378"/>
        <dbReference type="ChEBI" id="CHEBI:16526"/>
        <dbReference type="ChEBI" id="CHEBI:29991"/>
        <dbReference type="ChEBI" id="CHEBI:57966"/>
        <dbReference type="EC" id="4.1.1.11"/>
    </reaction>
</comment>
<comment type="cofactor">
    <cofactor evidence="1">
        <name>pyruvate</name>
        <dbReference type="ChEBI" id="CHEBI:15361"/>
    </cofactor>
    <text evidence="1">Binds 1 pyruvoyl group covalently per subunit.</text>
</comment>
<comment type="pathway">
    <text evidence="1">Cofactor biosynthesis; (R)-pantothenate biosynthesis; beta-alanine from L-aspartate: step 1/1.</text>
</comment>
<comment type="subunit">
    <text evidence="1">Heterooctamer of four alpha and four beta subunits.</text>
</comment>
<comment type="subcellular location">
    <subcellularLocation>
        <location evidence="1">Cytoplasm</location>
    </subcellularLocation>
</comment>
<comment type="PTM">
    <text evidence="1">Is synthesized initially as an inactive proenzyme, which is activated by self-cleavage at a specific serine bond to produce a beta-subunit with a hydroxyl group at its C-terminus and an alpha-subunit with a pyruvoyl group at its N-terminus.</text>
</comment>
<comment type="similarity">
    <text evidence="1">Belongs to the PanD family.</text>
</comment>
<proteinExistence type="inferred from homology"/>